<keyword id="KW-0227">DNA damage</keyword>
<keyword id="KW-0234">DNA repair</keyword>
<protein>
    <recommendedName>
        <fullName evidence="1">DNA mismatch repair protein MutL</fullName>
    </recommendedName>
</protein>
<feature type="chain" id="PRO_1000009986" description="DNA mismatch repair protein MutL">
    <location>
        <begin position="1"/>
        <end position="612"/>
    </location>
</feature>
<reference key="1">
    <citation type="journal article" date="2004" name="Proc. Natl. Acad. Sci. U.S.A.">
        <title>The louse-borne human pathogen Bartonella quintana is a genomic derivative of the zoonotic agent Bartonella henselae.</title>
        <authorList>
            <person name="Alsmark U.C.M."/>
            <person name="Frank A.C."/>
            <person name="Karlberg E.O."/>
            <person name="Legault B.-A."/>
            <person name="Ardell D.H."/>
            <person name="Canbaeck B."/>
            <person name="Eriksson A.-S."/>
            <person name="Naeslund A.K."/>
            <person name="Handley S.A."/>
            <person name="Huvet M."/>
            <person name="La Scola B."/>
            <person name="Holmberg M."/>
            <person name="Andersson S.G.E."/>
        </authorList>
    </citation>
    <scope>NUCLEOTIDE SEQUENCE [LARGE SCALE GENOMIC DNA]</scope>
    <source>
        <strain>Toulouse</strain>
    </source>
</reference>
<proteinExistence type="inferred from homology"/>
<organism>
    <name type="scientific">Bartonella quintana (strain Toulouse)</name>
    <name type="common">Rochalimaea quintana</name>
    <dbReference type="NCBI Taxonomy" id="283165"/>
    <lineage>
        <taxon>Bacteria</taxon>
        <taxon>Pseudomonadati</taxon>
        <taxon>Pseudomonadota</taxon>
        <taxon>Alphaproteobacteria</taxon>
        <taxon>Hyphomicrobiales</taxon>
        <taxon>Bartonellaceae</taxon>
        <taxon>Bartonella</taxon>
    </lineage>
</organism>
<name>MUTL_BARQU</name>
<gene>
    <name evidence="1" type="primary">mutL</name>
    <name type="ordered locus">BQ02570</name>
</gene>
<evidence type="ECO:0000255" key="1">
    <source>
        <dbReference type="HAMAP-Rule" id="MF_00149"/>
    </source>
</evidence>
<comment type="function">
    <text evidence="1">This protein is involved in the repair of mismatches in DNA. It is required for dam-dependent methyl-directed DNA mismatch repair. May act as a 'molecular matchmaker', a protein that promotes the formation of a stable complex between two or more DNA-binding proteins in an ATP-dependent manner without itself being part of a final effector complex.</text>
</comment>
<comment type="similarity">
    <text evidence="1">Belongs to the DNA mismatch repair MutL/HexB family.</text>
</comment>
<sequence length="612" mass="66888">MIIRHLSENIINQIAAGEVIERPANVVKELVENAIDAGATRIEIVTANGGKSFIKVSDNGCGIPADQLTLAISRHCTSKITDDVHNIYFLGFRGEALPSIGSVAKLKLTSRTQEAENATEIIVTAGKIIGPKPAAANPGTIVEVRDLFFVTPARLKFMKTDRAETNAISDMIKRIAIAFPHIRFSLSGLDRTSMELPATANSTQGQLQRITQIMGKEFAPNSIALNAKRESIRLTGFACLPSFNRSNSLHQFAYVNRRPVRDKFLWGTIRGAYADVMARDRYPVSILFIDLPPADVDVNVHPTKADVRFRDPGLIRGLIVGAIHEALHQIGVRPASTCSEAMLSAFQTSQPLGTFKSTHQTFSSQHHHLASAAASPLHKPLDATNFVNLREEAVPLMECLDMPSGDICTANTTPSSEELHYPLGAARAQIHKNYIIAQTQDSLIIVDQHAAHERLVYEALKDALYSKPLPSQLLLIPEIVELSEEDATCLLTHKDALQKFGLGIESFGPGAIVVRETPSMLGEVNVQALIKDLADEAAEYDTTNNLKAMIDCVAATMACHGSIRSGRLLRAEEMNALLRQIEATPHTGTCNHGRPTYIELKLADIERLFGRK</sequence>
<accession>Q6G0J4</accession>
<dbReference type="EMBL" id="BX897700">
    <property type="protein sequence ID" value="CAF25760.1"/>
    <property type="molecule type" value="Genomic_DNA"/>
</dbReference>
<dbReference type="RefSeq" id="WP_011179069.1">
    <property type="nucleotide sequence ID" value="NC_005955.1"/>
</dbReference>
<dbReference type="SMR" id="Q6G0J4"/>
<dbReference type="KEGG" id="bqu:BQ02570"/>
<dbReference type="eggNOG" id="COG0323">
    <property type="taxonomic scope" value="Bacteria"/>
</dbReference>
<dbReference type="HOGENOM" id="CLU_004131_4_2_5"/>
<dbReference type="OrthoDB" id="9763467at2"/>
<dbReference type="Proteomes" id="UP000000597">
    <property type="component" value="Chromosome"/>
</dbReference>
<dbReference type="GO" id="GO:0032300">
    <property type="term" value="C:mismatch repair complex"/>
    <property type="evidence" value="ECO:0007669"/>
    <property type="project" value="InterPro"/>
</dbReference>
<dbReference type="GO" id="GO:0005524">
    <property type="term" value="F:ATP binding"/>
    <property type="evidence" value="ECO:0007669"/>
    <property type="project" value="InterPro"/>
</dbReference>
<dbReference type="GO" id="GO:0016887">
    <property type="term" value="F:ATP hydrolysis activity"/>
    <property type="evidence" value="ECO:0007669"/>
    <property type="project" value="InterPro"/>
</dbReference>
<dbReference type="GO" id="GO:0140664">
    <property type="term" value="F:ATP-dependent DNA damage sensor activity"/>
    <property type="evidence" value="ECO:0007669"/>
    <property type="project" value="InterPro"/>
</dbReference>
<dbReference type="GO" id="GO:0030983">
    <property type="term" value="F:mismatched DNA binding"/>
    <property type="evidence" value="ECO:0007669"/>
    <property type="project" value="InterPro"/>
</dbReference>
<dbReference type="GO" id="GO:0006298">
    <property type="term" value="P:mismatch repair"/>
    <property type="evidence" value="ECO:0007669"/>
    <property type="project" value="UniProtKB-UniRule"/>
</dbReference>
<dbReference type="CDD" id="cd16926">
    <property type="entry name" value="HATPase_MutL-MLH-PMS-like"/>
    <property type="match status" value="1"/>
</dbReference>
<dbReference type="CDD" id="cd00782">
    <property type="entry name" value="MutL_Trans"/>
    <property type="match status" value="1"/>
</dbReference>
<dbReference type="FunFam" id="3.30.565.10:FF:000003">
    <property type="entry name" value="DNA mismatch repair endonuclease MutL"/>
    <property type="match status" value="1"/>
</dbReference>
<dbReference type="Gene3D" id="3.30.230.10">
    <property type="match status" value="1"/>
</dbReference>
<dbReference type="Gene3D" id="3.30.565.10">
    <property type="entry name" value="Histidine kinase-like ATPase, C-terminal domain"/>
    <property type="match status" value="1"/>
</dbReference>
<dbReference type="Gene3D" id="3.30.1540.20">
    <property type="entry name" value="MutL, C-terminal domain, dimerisation subdomain"/>
    <property type="match status" value="1"/>
</dbReference>
<dbReference type="Gene3D" id="3.30.1370.100">
    <property type="entry name" value="MutL, C-terminal domain, regulatory subdomain"/>
    <property type="match status" value="1"/>
</dbReference>
<dbReference type="HAMAP" id="MF_00149">
    <property type="entry name" value="DNA_mis_repair"/>
    <property type="match status" value="1"/>
</dbReference>
<dbReference type="InterPro" id="IPR014762">
    <property type="entry name" value="DNA_mismatch_repair_CS"/>
</dbReference>
<dbReference type="InterPro" id="IPR020667">
    <property type="entry name" value="DNA_mismatch_repair_MutL"/>
</dbReference>
<dbReference type="InterPro" id="IPR013507">
    <property type="entry name" value="DNA_mismatch_S5_2-like"/>
</dbReference>
<dbReference type="InterPro" id="IPR036890">
    <property type="entry name" value="HATPase_C_sf"/>
</dbReference>
<dbReference type="InterPro" id="IPR002099">
    <property type="entry name" value="MutL/Mlh/PMS"/>
</dbReference>
<dbReference type="InterPro" id="IPR038973">
    <property type="entry name" value="MutL/Mlh/Pms-like"/>
</dbReference>
<dbReference type="InterPro" id="IPR014790">
    <property type="entry name" value="MutL_C"/>
</dbReference>
<dbReference type="InterPro" id="IPR042120">
    <property type="entry name" value="MutL_C_dimsub"/>
</dbReference>
<dbReference type="InterPro" id="IPR042121">
    <property type="entry name" value="MutL_C_regsub"/>
</dbReference>
<dbReference type="InterPro" id="IPR037198">
    <property type="entry name" value="MutL_C_sf"/>
</dbReference>
<dbReference type="InterPro" id="IPR020568">
    <property type="entry name" value="Ribosomal_Su5_D2-typ_SF"/>
</dbReference>
<dbReference type="InterPro" id="IPR014721">
    <property type="entry name" value="Ribsml_uS5_D2-typ_fold_subgr"/>
</dbReference>
<dbReference type="NCBIfam" id="TIGR00585">
    <property type="entry name" value="mutl"/>
    <property type="match status" value="1"/>
</dbReference>
<dbReference type="NCBIfam" id="NF000953">
    <property type="entry name" value="PRK00095.2-4"/>
    <property type="match status" value="1"/>
</dbReference>
<dbReference type="PANTHER" id="PTHR10073">
    <property type="entry name" value="DNA MISMATCH REPAIR PROTEIN MLH, PMS, MUTL"/>
    <property type="match status" value="1"/>
</dbReference>
<dbReference type="PANTHER" id="PTHR10073:SF12">
    <property type="entry name" value="DNA MISMATCH REPAIR PROTEIN MLH1"/>
    <property type="match status" value="1"/>
</dbReference>
<dbReference type="Pfam" id="PF01119">
    <property type="entry name" value="DNA_mis_repair"/>
    <property type="match status" value="1"/>
</dbReference>
<dbReference type="Pfam" id="PF13589">
    <property type="entry name" value="HATPase_c_3"/>
    <property type="match status" value="1"/>
</dbReference>
<dbReference type="Pfam" id="PF08676">
    <property type="entry name" value="MutL_C"/>
    <property type="match status" value="1"/>
</dbReference>
<dbReference type="SMART" id="SM01340">
    <property type="entry name" value="DNA_mis_repair"/>
    <property type="match status" value="1"/>
</dbReference>
<dbReference type="SMART" id="SM00853">
    <property type="entry name" value="MutL_C"/>
    <property type="match status" value="1"/>
</dbReference>
<dbReference type="SUPFAM" id="SSF55874">
    <property type="entry name" value="ATPase domain of HSP90 chaperone/DNA topoisomerase II/histidine kinase"/>
    <property type="match status" value="1"/>
</dbReference>
<dbReference type="SUPFAM" id="SSF118116">
    <property type="entry name" value="DNA mismatch repair protein MutL"/>
    <property type="match status" value="1"/>
</dbReference>
<dbReference type="SUPFAM" id="SSF54211">
    <property type="entry name" value="Ribosomal protein S5 domain 2-like"/>
    <property type="match status" value="1"/>
</dbReference>
<dbReference type="PROSITE" id="PS00058">
    <property type="entry name" value="DNA_MISMATCH_REPAIR_1"/>
    <property type="match status" value="1"/>
</dbReference>